<organism>
    <name type="scientific">Citrus sinensis</name>
    <name type="common">Sweet orange</name>
    <name type="synonym">Citrus aurantium var. sinensis</name>
    <dbReference type="NCBI Taxonomy" id="2711"/>
    <lineage>
        <taxon>Eukaryota</taxon>
        <taxon>Viridiplantae</taxon>
        <taxon>Streptophyta</taxon>
        <taxon>Embryophyta</taxon>
        <taxon>Tracheophyta</taxon>
        <taxon>Spermatophyta</taxon>
        <taxon>Magnoliopsida</taxon>
        <taxon>eudicotyledons</taxon>
        <taxon>Gunneridae</taxon>
        <taxon>Pentapetalae</taxon>
        <taxon>rosids</taxon>
        <taxon>malvids</taxon>
        <taxon>Sapindales</taxon>
        <taxon>Rutaceae</taxon>
        <taxon>Aurantioideae</taxon>
        <taxon>Citrus</taxon>
    </lineage>
</organism>
<reference key="1">
    <citation type="journal article" date="2006" name="BMC Plant Biol.">
        <title>The complete chloroplast genome sequence of Citrus sinensis (L.) Osbeck var 'Ridge Pineapple': organization and phylogenetic relationships to other angiosperms.</title>
        <authorList>
            <person name="Bausher M.G."/>
            <person name="Singh N.D."/>
            <person name="Lee S.-B."/>
            <person name="Jansen R.K."/>
            <person name="Daniell H."/>
        </authorList>
    </citation>
    <scope>NUCLEOTIDE SEQUENCE [LARGE SCALE GENOMIC DNA]</scope>
    <source>
        <strain>cv. Osbeck var. Ridge Pineapple</strain>
    </source>
</reference>
<geneLocation type="chloroplast"/>
<sequence length="40" mass="4145">MADTTGRIPLWIIGTVTGIPVIGLIGIFFYGSYSGLGSSL</sequence>
<evidence type="ECO:0000255" key="1">
    <source>
        <dbReference type="HAMAP-Rule" id="MF_01305"/>
    </source>
</evidence>
<proteinExistence type="inferred from homology"/>
<comment type="function">
    <text evidence="1">One of the components of the core complex of photosystem II (PSII). PSII is a light-driven water:plastoquinone oxidoreductase that uses light energy to abstract electrons from H(2)O, generating O(2) and a proton gradient subsequently used for ATP formation. It consists of a core antenna complex that captures photons, and an electron transfer chain that converts photonic excitation into a charge separation.</text>
</comment>
<comment type="subunit">
    <text evidence="1">PSII is composed of 1 copy each of membrane proteins PsbA, PsbB, PsbC, PsbD, PsbE, PsbF, PsbH, PsbI, PsbJ, PsbK, PsbL, PsbM, PsbT, PsbX, PsbY, PsbZ, Psb30/Ycf12, at least 3 peripheral proteins of the oxygen-evolving complex and a large number of cofactors. It forms dimeric complexes.</text>
</comment>
<comment type="subcellular location">
    <subcellularLocation>
        <location evidence="1">Plastid</location>
        <location evidence="1">Chloroplast thylakoid membrane</location>
        <topology evidence="1">Single-pass membrane protein</topology>
    </subcellularLocation>
</comment>
<comment type="similarity">
    <text evidence="1">Belongs to the PsbJ family.</text>
</comment>
<accession>Q09MG4</accession>
<name>PSBJ_CITSI</name>
<keyword id="KW-0150">Chloroplast</keyword>
<keyword id="KW-0472">Membrane</keyword>
<keyword id="KW-0602">Photosynthesis</keyword>
<keyword id="KW-0604">Photosystem II</keyword>
<keyword id="KW-0934">Plastid</keyword>
<keyword id="KW-0674">Reaction center</keyword>
<keyword id="KW-0793">Thylakoid</keyword>
<keyword id="KW-0812">Transmembrane</keyword>
<keyword id="KW-1133">Transmembrane helix</keyword>
<dbReference type="EMBL" id="DQ864733">
    <property type="protein sequence ID" value="ABI49034.1"/>
    <property type="molecule type" value="Genomic_DNA"/>
</dbReference>
<dbReference type="RefSeq" id="YP_740489.1">
    <property type="nucleotide sequence ID" value="NC_008334.1"/>
</dbReference>
<dbReference type="SMR" id="Q09MG4"/>
<dbReference type="GeneID" id="4271219"/>
<dbReference type="KEGG" id="cit:4271219"/>
<dbReference type="GO" id="GO:0009535">
    <property type="term" value="C:chloroplast thylakoid membrane"/>
    <property type="evidence" value="ECO:0007669"/>
    <property type="project" value="UniProtKB-SubCell"/>
</dbReference>
<dbReference type="GO" id="GO:0009539">
    <property type="term" value="C:photosystem II reaction center"/>
    <property type="evidence" value="ECO:0007669"/>
    <property type="project" value="InterPro"/>
</dbReference>
<dbReference type="GO" id="GO:0015979">
    <property type="term" value="P:photosynthesis"/>
    <property type="evidence" value="ECO:0007669"/>
    <property type="project" value="UniProtKB-UniRule"/>
</dbReference>
<dbReference type="Gene3D" id="6.10.250.2070">
    <property type="match status" value="1"/>
</dbReference>
<dbReference type="HAMAP" id="MF_01305">
    <property type="entry name" value="PSII_PsbJ"/>
    <property type="match status" value="1"/>
</dbReference>
<dbReference type="InterPro" id="IPR002682">
    <property type="entry name" value="PSII_PsbJ"/>
</dbReference>
<dbReference type="InterPro" id="IPR037267">
    <property type="entry name" value="PSII_PsbJ_sf"/>
</dbReference>
<dbReference type="NCBIfam" id="NF002722">
    <property type="entry name" value="PRK02565.1"/>
    <property type="match status" value="1"/>
</dbReference>
<dbReference type="PANTHER" id="PTHR34812">
    <property type="entry name" value="PHOTOSYSTEM II REACTION CENTER PROTEIN J"/>
    <property type="match status" value="1"/>
</dbReference>
<dbReference type="PANTHER" id="PTHR34812:SF3">
    <property type="entry name" value="PHOTOSYSTEM II REACTION CENTER PROTEIN J"/>
    <property type="match status" value="1"/>
</dbReference>
<dbReference type="Pfam" id="PF01788">
    <property type="entry name" value="PsbJ"/>
    <property type="match status" value="1"/>
</dbReference>
<dbReference type="SUPFAM" id="SSF161021">
    <property type="entry name" value="Photosystem II reaction center protein J, PsbJ"/>
    <property type="match status" value="1"/>
</dbReference>
<protein>
    <recommendedName>
        <fullName evidence="1">Photosystem II reaction center protein J</fullName>
        <shortName evidence="1">PSII-J</shortName>
    </recommendedName>
</protein>
<gene>
    <name evidence="1" type="primary">psbJ</name>
</gene>
<feature type="chain" id="PRO_0000276089" description="Photosystem II reaction center protein J">
    <location>
        <begin position="1"/>
        <end position="40"/>
    </location>
</feature>
<feature type="transmembrane region" description="Helical" evidence="1">
    <location>
        <begin position="8"/>
        <end position="28"/>
    </location>
</feature>